<keyword id="KW-0963">Cytoplasm</keyword>
<keyword id="KW-0378">Hydrolase</keyword>
<keyword id="KW-0540">Nuclease</keyword>
<keyword id="KW-0690">Ribosome biogenesis</keyword>
<gene>
    <name evidence="1" type="primary">yqgF</name>
    <name type="ordered locus">SEN2940</name>
</gene>
<evidence type="ECO:0000255" key="1">
    <source>
        <dbReference type="HAMAP-Rule" id="MF_00651"/>
    </source>
</evidence>
<organism>
    <name type="scientific">Salmonella enteritidis PT4 (strain P125109)</name>
    <dbReference type="NCBI Taxonomy" id="550537"/>
    <lineage>
        <taxon>Bacteria</taxon>
        <taxon>Pseudomonadati</taxon>
        <taxon>Pseudomonadota</taxon>
        <taxon>Gammaproteobacteria</taxon>
        <taxon>Enterobacterales</taxon>
        <taxon>Enterobacteriaceae</taxon>
        <taxon>Salmonella</taxon>
    </lineage>
</organism>
<comment type="function">
    <text evidence="1">Could be a nuclease involved in processing of the 5'-end of pre-16S rRNA.</text>
</comment>
<comment type="subcellular location">
    <subcellularLocation>
        <location evidence="1">Cytoplasm</location>
    </subcellularLocation>
</comment>
<comment type="similarity">
    <text evidence="1">Belongs to the YqgF nuclease family.</text>
</comment>
<feature type="chain" id="PRO_1000131068" description="Putative pre-16S rRNA nuclease">
    <location>
        <begin position="1"/>
        <end position="138"/>
    </location>
</feature>
<accession>B5QY73</accession>
<reference key="1">
    <citation type="journal article" date="2008" name="Genome Res.">
        <title>Comparative genome analysis of Salmonella enteritidis PT4 and Salmonella gallinarum 287/91 provides insights into evolutionary and host adaptation pathways.</title>
        <authorList>
            <person name="Thomson N.R."/>
            <person name="Clayton D.J."/>
            <person name="Windhorst D."/>
            <person name="Vernikos G."/>
            <person name="Davidson S."/>
            <person name="Churcher C."/>
            <person name="Quail M.A."/>
            <person name="Stevens M."/>
            <person name="Jones M.A."/>
            <person name="Watson M."/>
            <person name="Barron A."/>
            <person name="Layton A."/>
            <person name="Pickard D."/>
            <person name="Kingsley R.A."/>
            <person name="Bignell A."/>
            <person name="Clark L."/>
            <person name="Harris B."/>
            <person name="Ormond D."/>
            <person name="Abdellah Z."/>
            <person name="Brooks K."/>
            <person name="Cherevach I."/>
            <person name="Chillingworth T."/>
            <person name="Woodward J."/>
            <person name="Norberczak H."/>
            <person name="Lord A."/>
            <person name="Arrowsmith C."/>
            <person name="Jagels K."/>
            <person name="Moule S."/>
            <person name="Mungall K."/>
            <person name="Saunders M."/>
            <person name="Whitehead S."/>
            <person name="Chabalgoity J.A."/>
            <person name="Maskell D."/>
            <person name="Humphreys T."/>
            <person name="Roberts M."/>
            <person name="Barrow P.A."/>
            <person name="Dougan G."/>
            <person name="Parkhill J."/>
        </authorList>
    </citation>
    <scope>NUCLEOTIDE SEQUENCE [LARGE SCALE GENOMIC DNA]</scope>
    <source>
        <strain>P125109</strain>
    </source>
</reference>
<protein>
    <recommendedName>
        <fullName evidence="1">Putative pre-16S rRNA nuclease</fullName>
        <ecNumber evidence="1">3.1.-.-</ecNumber>
    </recommendedName>
</protein>
<name>YQGF_SALEP</name>
<sequence length="138" mass="15248">MSDTLLAFDFGTKSIGVAIGQRITGTARPLPAIKAQDGTPDWMLIERLLKEWQPDEIIVGLPLNMDGTEQPLTARARKFANRIHGRFGVTVTLHDERLSTVEARSGLFERGGYRALNKGKVDSASAVIILESYFEQGY</sequence>
<proteinExistence type="inferred from homology"/>
<dbReference type="EC" id="3.1.-.-" evidence="1"/>
<dbReference type="EMBL" id="AM933172">
    <property type="protein sequence ID" value="CAR34517.1"/>
    <property type="molecule type" value="Genomic_DNA"/>
</dbReference>
<dbReference type="SMR" id="B5QY73"/>
<dbReference type="KEGG" id="set:SEN2940"/>
<dbReference type="HOGENOM" id="CLU_098240_3_0_6"/>
<dbReference type="Proteomes" id="UP000000613">
    <property type="component" value="Chromosome"/>
</dbReference>
<dbReference type="GO" id="GO:0005829">
    <property type="term" value="C:cytosol"/>
    <property type="evidence" value="ECO:0007669"/>
    <property type="project" value="TreeGrafter"/>
</dbReference>
<dbReference type="GO" id="GO:0004518">
    <property type="term" value="F:nuclease activity"/>
    <property type="evidence" value="ECO:0007669"/>
    <property type="project" value="UniProtKB-KW"/>
</dbReference>
<dbReference type="GO" id="GO:0000967">
    <property type="term" value="P:rRNA 5'-end processing"/>
    <property type="evidence" value="ECO:0007669"/>
    <property type="project" value="UniProtKB-UniRule"/>
</dbReference>
<dbReference type="CDD" id="cd16964">
    <property type="entry name" value="YqgF"/>
    <property type="match status" value="1"/>
</dbReference>
<dbReference type="FunFam" id="3.30.420.140:FF:000002">
    <property type="entry name" value="Putative pre-16S rRNA nuclease"/>
    <property type="match status" value="1"/>
</dbReference>
<dbReference type="Gene3D" id="3.30.420.140">
    <property type="entry name" value="YqgF/RNase H-like domain"/>
    <property type="match status" value="1"/>
</dbReference>
<dbReference type="HAMAP" id="MF_00651">
    <property type="entry name" value="Nuclease_YqgF"/>
    <property type="match status" value="1"/>
</dbReference>
<dbReference type="InterPro" id="IPR012337">
    <property type="entry name" value="RNaseH-like_sf"/>
</dbReference>
<dbReference type="InterPro" id="IPR005227">
    <property type="entry name" value="YqgF"/>
</dbReference>
<dbReference type="InterPro" id="IPR006641">
    <property type="entry name" value="YqgF/RNaseH-like_dom"/>
</dbReference>
<dbReference type="InterPro" id="IPR037027">
    <property type="entry name" value="YqgF/RNaseH-like_dom_sf"/>
</dbReference>
<dbReference type="NCBIfam" id="TIGR00250">
    <property type="entry name" value="RNAse_H_YqgF"/>
    <property type="match status" value="1"/>
</dbReference>
<dbReference type="PANTHER" id="PTHR33317">
    <property type="entry name" value="POLYNUCLEOTIDYL TRANSFERASE, RIBONUCLEASE H-LIKE SUPERFAMILY PROTEIN"/>
    <property type="match status" value="1"/>
</dbReference>
<dbReference type="PANTHER" id="PTHR33317:SF4">
    <property type="entry name" value="POLYNUCLEOTIDYL TRANSFERASE, RIBONUCLEASE H-LIKE SUPERFAMILY PROTEIN"/>
    <property type="match status" value="1"/>
</dbReference>
<dbReference type="Pfam" id="PF03652">
    <property type="entry name" value="RuvX"/>
    <property type="match status" value="1"/>
</dbReference>
<dbReference type="SMART" id="SM00732">
    <property type="entry name" value="YqgFc"/>
    <property type="match status" value="1"/>
</dbReference>
<dbReference type="SUPFAM" id="SSF53098">
    <property type="entry name" value="Ribonuclease H-like"/>
    <property type="match status" value="1"/>
</dbReference>